<organism>
    <name type="scientific">Gluconacetobacter diazotrophicus (strain ATCC 49037 / DSM 5601 / CCUG 37298 / CIP 103539 / LMG 7603 / PAl5)</name>
    <dbReference type="NCBI Taxonomy" id="272568"/>
    <lineage>
        <taxon>Bacteria</taxon>
        <taxon>Pseudomonadati</taxon>
        <taxon>Pseudomonadota</taxon>
        <taxon>Alphaproteobacteria</taxon>
        <taxon>Acetobacterales</taxon>
        <taxon>Acetobacteraceae</taxon>
        <taxon>Gluconacetobacter</taxon>
    </lineage>
</organism>
<comment type="function">
    <text evidence="1">Binds 16S rRNA, required for the assembly of 30S particles and may also be responsible for determining the conformation of the 16S rRNA at the A site.</text>
</comment>
<comment type="subunit">
    <text evidence="1">Part of the 30S ribosomal subunit. Contacts proteins S3 and S10.</text>
</comment>
<comment type="similarity">
    <text evidence="1">Belongs to the universal ribosomal protein uS14 family.</text>
</comment>
<comment type="sequence caution" evidence="2">
    <conflict type="erroneous initiation">
        <sequence resource="EMBL-CDS" id="CAP57334"/>
    </conflict>
</comment>
<accession>A9H3M4</accession>
<accession>B2QY48</accession>
<accession>B5ZIH6</accession>
<proteinExistence type="inferred from homology"/>
<evidence type="ECO:0000255" key="1">
    <source>
        <dbReference type="HAMAP-Rule" id="MF_00537"/>
    </source>
</evidence>
<evidence type="ECO:0000305" key="2"/>
<feature type="chain" id="PRO_0000354383" description="Small ribosomal subunit protein uS14">
    <location>
        <begin position="1"/>
        <end position="101"/>
    </location>
</feature>
<protein>
    <recommendedName>
        <fullName evidence="1">Small ribosomal subunit protein uS14</fullName>
    </recommendedName>
    <alternativeName>
        <fullName evidence="2">30S ribosomal protein S14</fullName>
    </alternativeName>
</protein>
<name>RS14_GLUDA</name>
<dbReference type="EMBL" id="AM889285">
    <property type="protein sequence ID" value="CAP57334.1"/>
    <property type="status" value="ALT_INIT"/>
    <property type="molecule type" value="Genomic_DNA"/>
</dbReference>
<dbReference type="EMBL" id="CP001189">
    <property type="protein sequence ID" value="ACI52709.1"/>
    <property type="molecule type" value="Genomic_DNA"/>
</dbReference>
<dbReference type="RefSeq" id="WP_012554692.1">
    <property type="nucleotide sequence ID" value="NC_010125.1"/>
</dbReference>
<dbReference type="SMR" id="A9H3M4"/>
<dbReference type="STRING" id="272568.GDI3391"/>
<dbReference type="KEGG" id="gdi:GDI3391"/>
<dbReference type="KEGG" id="gdj:Gdia_2979"/>
<dbReference type="eggNOG" id="COG0199">
    <property type="taxonomic scope" value="Bacteria"/>
</dbReference>
<dbReference type="HOGENOM" id="CLU_139869_0_1_5"/>
<dbReference type="OrthoDB" id="9810484at2"/>
<dbReference type="Proteomes" id="UP000001176">
    <property type="component" value="Chromosome"/>
</dbReference>
<dbReference type="GO" id="GO:0005737">
    <property type="term" value="C:cytoplasm"/>
    <property type="evidence" value="ECO:0007669"/>
    <property type="project" value="UniProtKB-ARBA"/>
</dbReference>
<dbReference type="GO" id="GO:0015935">
    <property type="term" value="C:small ribosomal subunit"/>
    <property type="evidence" value="ECO:0007669"/>
    <property type="project" value="TreeGrafter"/>
</dbReference>
<dbReference type="GO" id="GO:0019843">
    <property type="term" value="F:rRNA binding"/>
    <property type="evidence" value="ECO:0007669"/>
    <property type="project" value="UniProtKB-UniRule"/>
</dbReference>
<dbReference type="GO" id="GO:0003735">
    <property type="term" value="F:structural constituent of ribosome"/>
    <property type="evidence" value="ECO:0007669"/>
    <property type="project" value="InterPro"/>
</dbReference>
<dbReference type="GO" id="GO:0006412">
    <property type="term" value="P:translation"/>
    <property type="evidence" value="ECO:0007669"/>
    <property type="project" value="UniProtKB-UniRule"/>
</dbReference>
<dbReference type="FunFam" id="1.10.287.1480:FF:000001">
    <property type="entry name" value="30S ribosomal protein S14"/>
    <property type="match status" value="1"/>
</dbReference>
<dbReference type="Gene3D" id="1.10.287.1480">
    <property type="match status" value="1"/>
</dbReference>
<dbReference type="HAMAP" id="MF_00537">
    <property type="entry name" value="Ribosomal_uS14_1"/>
    <property type="match status" value="1"/>
</dbReference>
<dbReference type="InterPro" id="IPR001209">
    <property type="entry name" value="Ribosomal_uS14"/>
</dbReference>
<dbReference type="InterPro" id="IPR023036">
    <property type="entry name" value="Ribosomal_uS14_bac/plastid"/>
</dbReference>
<dbReference type="InterPro" id="IPR018271">
    <property type="entry name" value="Ribosomal_uS14_CS"/>
</dbReference>
<dbReference type="NCBIfam" id="NF006477">
    <property type="entry name" value="PRK08881.1"/>
    <property type="match status" value="1"/>
</dbReference>
<dbReference type="PANTHER" id="PTHR19836">
    <property type="entry name" value="30S RIBOSOMAL PROTEIN S14"/>
    <property type="match status" value="1"/>
</dbReference>
<dbReference type="PANTHER" id="PTHR19836:SF19">
    <property type="entry name" value="SMALL RIBOSOMAL SUBUNIT PROTEIN US14M"/>
    <property type="match status" value="1"/>
</dbReference>
<dbReference type="Pfam" id="PF00253">
    <property type="entry name" value="Ribosomal_S14"/>
    <property type="match status" value="1"/>
</dbReference>
<dbReference type="SUPFAM" id="SSF57716">
    <property type="entry name" value="Glucocorticoid receptor-like (DNA-binding domain)"/>
    <property type="match status" value="1"/>
</dbReference>
<dbReference type="PROSITE" id="PS00527">
    <property type="entry name" value="RIBOSOMAL_S14"/>
    <property type="match status" value="1"/>
</dbReference>
<keyword id="KW-1185">Reference proteome</keyword>
<keyword id="KW-0687">Ribonucleoprotein</keyword>
<keyword id="KW-0689">Ribosomal protein</keyword>
<keyword id="KW-0694">RNA-binding</keyword>
<keyword id="KW-0699">rRNA-binding</keyword>
<gene>
    <name evidence="1" type="primary">rpsN</name>
    <name type="ordered locus">GDI3391</name>
    <name type="ordered locus">Gdia_2979</name>
</gene>
<reference key="1">
    <citation type="journal article" date="2009" name="BMC Genomics">
        <title>Complete genome sequence of the sugarcane nitrogen-fixing endophyte Gluconacetobacter diazotrophicus Pal5.</title>
        <authorList>
            <person name="Bertalan M."/>
            <person name="Albano R."/>
            <person name="de Padua V."/>
            <person name="Rouws L."/>
            <person name="Rojas C."/>
            <person name="Hemerly A."/>
            <person name="Teixeira K."/>
            <person name="Schwab S."/>
            <person name="Araujo J."/>
            <person name="Oliveira A."/>
            <person name="Franca L."/>
            <person name="Magalhaes V."/>
            <person name="Alqueres S."/>
            <person name="Cardoso A."/>
            <person name="Almeida W."/>
            <person name="Loureiro M.M."/>
            <person name="Nogueira E."/>
            <person name="Cidade D."/>
            <person name="Oliveira D."/>
            <person name="Simao T."/>
            <person name="Macedo J."/>
            <person name="Valadao A."/>
            <person name="Dreschsel M."/>
            <person name="Freitas F."/>
            <person name="Vidal M."/>
            <person name="Guedes H."/>
            <person name="Rodrigues E."/>
            <person name="Meneses C."/>
            <person name="Brioso P."/>
            <person name="Pozzer L."/>
            <person name="Figueiredo D."/>
            <person name="Montano H."/>
            <person name="Junior J."/>
            <person name="de Souza Filho G."/>
            <person name="Martin Quintana Flores V."/>
            <person name="Ferreira B."/>
            <person name="Branco A."/>
            <person name="Gonzalez P."/>
            <person name="Guillobel H."/>
            <person name="Lemos M."/>
            <person name="Seibel L."/>
            <person name="Macedo J."/>
            <person name="Alves-Ferreira M."/>
            <person name="Sachetto-Martins G."/>
            <person name="Coelho A."/>
            <person name="Santos E."/>
            <person name="Amaral G."/>
            <person name="Neves A."/>
            <person name="Pacheco A.B."/>
            <person name="Carvalho D."/>
            <person name="Lery L."/>
            <person name="Bisch P."/>
            <person name="Rossle S.C."/>
            <person name="Urmenyi T."/>
            <person name="Rael Pereira A."/>
            <person name="Silva R."/>
            <person name="Rondinelli E."/>
            <person name="von Kruger W."/>
            <person name="Martins O."/>
            <person name="Baldani J.I."/>
            <person name="Ferreira P.C."/>
        </authorList>
    </citation>
    <scope>NUCLEOTIDE SEQUENCE [LARGE SCALE GENOMIC DNA]</scope>
    <source>
        <strain>ATCC 49037 / DSM 5601 / CCUG 37298 / CIP 103539 / LMG 7603 / PAl5</strain>
    </source>
</reference>
<reference key="2">
    <citation type="journal article" date="2010" name="Stand. Genomic Sci.">
        <title>Two genome sequences of the same bacterial strain, Gluconacetobacter diazotrophicus PAl 5, suggest a new standard in genome sequence submission.</title>
        <authorList>
            <person name="Giongo A."/>
            <person name="Tyler H.L."/>
            <person name="Zipperer U.N."/>
            <person name="Triplett E.W."/>
        </authorList>
    </citation>
    <scope>NUCLEOTIDE SEQUENCE [LARGE SCALE GENOMIC DNA]</scope>
    <source>
        <strain>ATCC 49037 / DSM 5601 / CCUG 37298 / CIP 103539 / LMG 7603 / PAl5</strain>
    </source>
</reference>
<sequence length="101" mass="11500">MAKISAVNRNAKRARMAGRDKAKRIALKNIIMDRTLPVEDRFEASMKLAELPRNGSRVRVRLRCKLTGRARANYRKFELCRVALRDLASSGQIPGMVKSSW</sequence>